<accession>A4WFK2</accession>
<proteinExistence type="inferred from homology"/>
<protein>
    <recommendedName>
        <fullName evidence="1">Fe/S biogenesis protein NfuA</fullName>
    </recommendedName>
</protein>
<feature type="chain" id="PRO_1000069869" description="Fe/S biogenesis protein NfuA">
    <location>
        <begin position="1"/>
        <end position="191"/>
    </location>
</feature>
<feature type="binding site" evidence="1">
    <location>
        <position position="149"/>
    </location>
    <ligand>
        <name>[4Fe-4S] cluster</name>
        <dbReference type="ChEBI" id="CHEBI:49883"/>
    </ligand>
</feature>
<feature type="binding site" evidence="1">
    <location>
        <position position="152"/>
    </location>
    <ligand>
        <name>[4Fe-4S] cluster</name>
        <dbReference type="ChEBI" id="CHEBI:49883"/>
    </ligand>
</feature>
<evidence type="ECO:0000255" key="1">
    <source>
        <dbReference type="HAMAP-Rule" id="MF_01637"/>
    </source>
</evidence>
<reference key="1">
    <citation type="journal article" date="2010" name="PLoS Genet.">
        <title>Genome sequence of the plant growth promoting endophytic bacterium Enterobacter sp. 638.</title>
        <authorList>
            <person name="Taghavi S."/>
            <person name="van der Lelie D."/>
            <person name="Hoffman A."/>
            <person name="Zhang Y.B."/>
            <person name="Walla M.D."/>
            <person name="Vangronsveld J."/>
            <person name="Newman L."/>
            <person name="Monchy S."/>
        </authorList>
    </citation>
    <scope>NUCLEOTIDE SEQUENCE [LARGE SCALE GENOMIC DNA]</scope>
    <source>
        <strain>638</strain>
    </source>
</reference>
<gene>
    <name evidence="1" type="primary">nfuA</name>
    <name type="ordered locus">Ent638_3827</name>
</gene>
<name>NFUA_ENT38</name>
<dbReference type="EMBL" id="CP000653">
    <property type="protein sequence ID" value="ABP62482.1"/>
    <property type="molecule type" value="Genomic_DNA"/>
</dbReference>
<dbReference type="RefSeq" id="WP_015960787.1">
    <property type="nucleotide sequence ID" value="NC_009436.1"/>
</dbReference>
<dbReference type="SMR" id="A4WFK2"/>
<dbReference type="STRING" id="399742.Ent638_3827"/>
<dbReference type="KEGG" id="ent:Ent638_3827"/>
<dbReference type="eggNOG" id="COG0316">
    <property type="taxonomic scope" value="Bacteria"/>
</dbReference>
<dbReference type="eggNOG" id="COG0694">
    <property type="taxonomic scope" value="Bacteria"/>
</dbReference>
<dbReference type="HOGENOM" id="CLU_094569_0_0_6"/>
<dbReference type="OrthoDB" id="9785450at2"/>
<dbReference type="Proteomes" id="UP000000230">
    <property type="component" value="Chromosome"/>
</dbReference>
<dbReference type="GO" id="GO:0051539">
    <property type="term" value="F:4 iron, 4 sulfur cluster binding"/>
    <property type="evidence" value="ECO:0007669"/>
    <property type="project" value="UniProtKB-UniRule"/>
</dbReference>
<dbReference type="GO" id="GO:0005506">
    <property type="term" value="F:iron ion binding"/>
    <property type="evidence" value="ECO:0007669"/>
    <property type="project" value="InterPro"/>
</dbReference>
<dbReference type="GO" id="GO:0016226">
    <property type="term" value="P:iron-sulfur cluster assembly"/>
    <property type="evidence" value="ECO:0007669"/>
    <property type="project" value="UniProtKB-UniRule"/>
</dbReference>
<dbReference type="GO" id="GO:0051604">
    <property type="term" value="P:protein maturation"/>
    <property type="evidence" value="ECO:0007669"/>
    <property type="project" value="UniProtKB-UniRule"/>
</dbReference>
<dbReference type="FunFam" id="2.60.300.12:FF:000004">
    <property type="entry name" value="Fe/S biogenesis protein NfuA"/>
    <property type="match status" value="1"/>
</dbReference>
<dbReference type="FunFam" id="3.30.300.130:FF:000002">
    <property type="entry name" value="Fe/S biogenesis protein NfuA"/>
    <property type="match status" value="1"/>
</dbReference>
<dbReference type="Gene3D" id="3.30.300.130">
    <property type="entry name" value="Fe-S cluster assembly (FSCA)"/>
    <property type="match status" value="1"/>
</dbReference>
<dbReference type="Gene3D" id="2.60.300.12">
    <property type="entry name" value="HesB-like domain"/>
    <property type="match status" value="1"/>
</dbReference>
<dbReference type="HAMAP" id="MF_01637">
    <property type="entry name" value="Fe_S_biogen_NfuA"/>
    <property type="match status" value="1"/>
</dbReference>
<dbReference type="InterPro" id="IPR017726">
    <property type="entry name" value="Fe/S_biogenesis_protein_NfuA"/>
</dbReference>
<dbReference type="InterPro" id="IPR000361">
    <property type="entry name" value="FeS_biogenesis"/>
</dbReference>
<dbReference type="InterPro" id="IPR034904">
    <property type="entry name" value="FSCA_dom_sf"/>
</dbReference>
<dbReference type="InterPro" id="IPR035903">
    <property type="entry name" value="HesB-like_dom_sf"/>
</dbReference>
<dbReference type="InterPro" id="IPR001075">
    <property type="entry name" value="NIF_FeS_clus_asmbl_NifU_C"/>
</dbReference>
<dbReference type="NCBIfam" id="NF008392">
    <property type="entry name" value="PRK11190.1"/>
    <property type="match status" value="1"/>
</dbReference>
<dbReference type="NCBIfam" id="TIGR03341">
    <property type="entry name" value="YhgI_GntY"/>
    <property type="match status" value="1"/>
</dbReference>
<dbReference type="PANTHER" id="PTHR11178:SF51">
    <property type="entry name" value="FE_S BIOGENESIS PROTEIN NFUA"/>
    <property type="match status" value="1"/>
</dbReference>
<dbReference type="PANTHER" id="PTHR11178">
    <property type="entry name" value="IRON-SULFUR CLUSTER SCAFFOLD PROTEIN NFU-RELATED"/>
    <property type="match status" value="1"/>
</dbReference>
<dbReference type="Pfam" id="PF01521">
    <property type="entry name" value="Fe-S_biosyn"/>
    <property type="match status" value="1"/>
</dbReference>
<dbReference type="Pfam" id="PF01106">
    <property type="entry name" value="NifU"/>
    <property type="match status" value="1"/>
</dbReference>
<dbReference type="SUPFAM" id="SSF117916">
    <property type="entry name" value="Fe-S cluster assembly (FSCA) domain-like"/>
    <property type="match status" value="1"/>
</dbReference>
<dbReference type="SUPFAM" id="SSF89360">
    <property type="entry name" value="HesB-like domain"/>
    <property type="match status" value="1"/>
</dbReference>
<comment type="function">
    <text evidence="1">Involved in iron-sulfur cluster biogenesis. Binds a 4Fe-4S cluster, can transfer this cluster to apoproteins, and thereby intervenes in the maturation of Fe/S proteins. Could also act as a scaffold/chaperone for damaged Fe/S proteins.</text>
</comment>
<comment type="cofactor">
    <cofactor evidence="1">
        <name>[4Fe-4S] cluster</name>
        <dbReference type="ChEBI" id="CHEBI:49883"/>
    </cofactor>
    <text evidence="1">Binds 1 [4Fe-4S] cluster per subunit. The cluster is presumably bound at the interface of two monomers.</text>
</comment>
<comment type="subunit">
    <text evidence="1">Homodimer.</text>
</comment>
<comment type="similarity">
    <text evidence="1">Belongs to the NfuA family.</text>
</comment>
<organism>
    <name type="scientific">Enterobacter sp. (strain 638)</name>
    <dbReference type="NCBI Taxonomy" id="399742"/>
    <lineage>
        <taxon>Bacteria</taxon>
        <taxon>Pseudomonadati</taxon>
        <taxon>Pseudomonadota</taxon>
        <taxon>Gammaproteobacteria</taxon>
        <taxon>Enterobacterales</taxon>
        <taxon>Enterobacteriaceae</taxon>
        <taxon>Enterobacter</taxon>
    </lineage>
</organism>
<keyword id="KW-0004">4Fe-4S</keyword>
<keyword id="KW-0408">Iron</keyword>
<keyword id="KW-0411">Iron-sulfur</keyword>
<keyword id="KW-0479">Metal-binding</keyword>
<sequence length="191" mass="20980">MIRISDSAQAHFAKLLANQEEGTQIRVFVINPGTPNAECGVSYCPPDAVEASDTALKFELLTAYVDELSAPYLDDAEIDFVTDQLGSQLTLKAPNAKMRKVSDDAPLMERVEYLLQSQINPQLAGHGGRVTLMEITEDGLAILQFGGGCNGCSMVDVTLKEGIEKQMLNEFPELKGVRDLTEHQRGEHSYY</sequence>